<gene>
    <name evidence="1" type="primary">glk</name>
    <name type="ordered locus">YpsIP31758_1332</name>
</gene>
<keyword id="KW-0067">ATP-binding</keyword>
<keyword id="KW-0963">Cytoplasm</keyword>
<keyword id="KW-0324">Glycolysis</keyword>
<keyword id="KW-0418">Kinase</keyword>
<keyword id="KW-0547">Nucleotide-binding</keyword>
<keyword id="KW-0808">Transferase</keyword>
<comment type="catalytic activity">
    <reaction evidence="1">
        <text>D-glucose + ATP = D-glucose 6-phosphate + ADP + H(+)</text>
        <dbReference type="Rhea" id="RHEA:17825"/>
        <dbReference type="ChEBI" id="CHEBI:4167"/>
        <dbReference type="ChEBI" id="CHEBI:15378"/>
        <dbReference type="ChEBI" id="CHEBI:30616"/>
        <dbReference type="ChEBI" id="CHEBI:61548"/>
        <dbReference type="ChEBI" id="CHEBI:456216"/>
        <dbReference type="EC" id="2.7.1.2"/>
    </reaction>
</comment>
<comment type="subcellular location">
    <subcellularLocation>
        <location evidence="1">Cytoplasm</location>
    </subcellularLocation>
</comment>
<comment type="similarity">
    <text evidence="1">Belongs to the bacterial glucokinase family.</text>
</comment>
<protein>
    <recommendedName>
        <fullName evidence="1">Glucokinase</fullName>
        <ecNumber evidence="1">2.7.1.2</ecNumber>
    </recommendedName>
    <alternativeName>
        <fullName evidence="1">Glucose kinase</fullName>
    </alternativeName>
</protein>
<proteinExistence type="inferred from homology"/>
<evidence type="ECO:0000255" key="1">
    <source>
        <dbReference type="HAMAP-Rule" id="MF_00524"/>
    </source>
</evidence>
<organism>
    <name type="scientific">Yersinia pseudotuberculosis serotype O:1b (strain IP 31758)</name>
    <dbReference type="NCBI Taxonomy" id="349747"/>
    <lineage>
        <taxon>Bacteria</taxon>
        <taxon>Pseudomonadati</taxon>
        <taxon>Pseudomonadota</taxon>
        <taxon>Gammaproteobacteria</taxon>
        <taxon>Enterobacterales</taxon>
        <taxon>Yersiniaceae</taxon>
        <taxon>Yersinia</taxon>
    </lineage>
</organism>
<dbReference type="EC" id="2.7.1.2" evidence="1"/>
<dbReference type="EMBL" id="CP000720">
    <property type="protein sequence ID" value="ABS49482.1"/>
    <property type="molecule type" value="Genomic_DNA"/>
</dbReference>
<dbReference type="RefSeq" id="WP_002211615.1">
    <property type="nucleotide sequence ID" value="NC_009708.1"/>
</dbReference>
<dbReference type="SMR" id="A7FGD3"/>
<dbReference type="GeneID" id="57975727"/>
<dbReference type="KEGG" id="ypi:YpsIP31758_1332"/>
<dbReference type="HOGENOM" id="CLU_042582_1_0_6"/>
<dbReference type="Proteomes" id="UP000002412">
    <property type="component" value="Chromosome"/>
</dbReference>
<dbReference type="GO" id="GO:0005829">
    <property type="term" value="C:cytosol"/>
    <property type="evidence" value="ECO:0007669"/>
    <property type="project" value="TreeGrafter"/>
</dbReference>
<dbReference type="GO" id="GO:0005524">
    <property type="term" value="F:ATP binding"/>
    <property type="evidence" value="ECO:0007669"/>
    <property type="project" value="UniProtKB-UniRule"/>
</dbReference>
<dbReference type="GO" id="GO:0005536">
    <property type="term" value="F:D-glucose binding"/>
    <property type="evidence" value="ECO:0007669"/>
    <property type="project" value="InterPro"/>
</dbReference>
<dbReference type="GO" id="GO:0004340">
    <property type="term" value="F:glucokinase activity"/>
    <property type="evidence" value="ECO:0007669"/>
    <property type="project" value="UniProtKB-UniRule"/>
</dbReference>
<dbReference type="GO" id="GO:0006096">
    <property type="term" value="P:glycolytic process"/>
    <property type="evidence" value="ECO:0007669"/>
    <property type="project" value="UniProtKB-UniRule"/>
</dbReference>
<dbReference type="CDD" id="cd24008">
    <property type="entry name" value="ASKHA_NBD_GLK"/>
    <property type="match status" value="1"/>
</dbReference>
<dbReference type="FunFam" id="3.30.420.40:FF:000045">
    <property type="entry name" value="Glucokinase"/>
    <property type="match status" value="1"/>
</dbReference>
<dbReference type="FunFam" id="3.40.367.20:FF:000002">
    <property type="entry name" value="Glucokinase"/>
    <property type="match status" value="1"/>
</dbReference>
<dbReference type="Gene3D" id="3.30.420.40">
    <property type="match status" value="1"/>
</dbReference>
<dbReference type="Gene3D" id="3.40.367.20">
    <property type="match status" value="1"/>
</dbReference>
<dbReference type="HAMAP" id="MF_00524">
    <property type="entry name" value="Glucokinase"/>
    <property type="match status" value="1"/>
</dbReference>
<dbReference type="InterPro" id="IPR043129">
    <property type="entry name" value="ATPase_NBD"/>
</dbReference>
<dbReference type="InterPro" id="IPR050201">
    <property type="entry name" value="Bacterial_glucokinase"/>
</dbReference>
<dbReference type="InterPro" id="IPR003836">
    <property type="entry name" value="Glucokinase"/>
</dbReference>
<dbReference type="NCBIfam" id="TIGR00749">
    <property type="entry name" value="glk"/>
    <property type="match status" value="1"/>
</dbReference>
<dbReference type="NCBIfam" id="NF001414">
    <property type="entry name" value="PRK00292.1-1"/>
    <property type="match status" value="1"/>
</dbReference>
<dbReference type="NCBIfam" id="NF001416">
    <property type="entry name" value="PRK00292.1-3"/>
    <property type="match status" value="1"/>
</dbReference>
<dbReference type="NCBIfam" id="NF009073">
    <property type="entry name" value="PRK12408.1"/>
    <property type="match status" value="1"/>
</dbReference>
<dbReference type="PANTHER" id="PTHR47690">
    <property type="entry name" value="GLUCOKINASE"/>
    <property type="match status" value="1"/>
</dbReference>
<dbReference type="PANTHER" id="PTHR47690:SF1">
    <property type="entry name" value="GLUCOKINASE"/>
    <property type="match status" value="1"/>
</dbReference>
<dbReference type="Pfam" id="PF02685">
    <property type="entry name" value="Glucokinase"/>
    <property type="match status" value="1"/>
</dbReference>
<dbReference type="SUPFAM" id="SSF53067">
    <property type="entry name" value="Actin-like ATPase domain"/>
    <property type="match status" value="1"/>
</dbReference>
<sequence length="323" mass="34664">MTTYALVGDVGGTNARLALCAVATGEILQAKTYSGLEYESLEDVIKQYLSEHQAKVTDACIAIACPITGDWVAMTNHTWAFSIAAMQQNLGLDHLEVINDFTAVSMAIPVLPAQDVLQFGGTQPQPGKPVAVYGAGTGLGVAHLVNVDRRWISLAGEGGHVDFAPNSEEEDQILAVLRQELGHVSAERVLSGPGLVNLYRAIVISDARLPEKLAPKDITARALADSCTDCRRALSLFCVIMGRFGGNLALNLSTFGGVYIAGGIVPRFMEFFKASGFRAAFEDKGRFKDFLQDIPVYMITHPQPGLLGAGAYLRQKLGYELSS</sequence>
<feature type="chain" id="PRO_1000060926" description="Glucokinase">
    <location>
        <begin position="1"/>
        <end position="323"/>
    </location>
</feature>
<feature type="binding site" evidence="1">
    <location>
        <begin position="8"/>
        <end position="13"/>
    </location>
    <ligand>
        <name>ATP</name>
        <dbReference type="ChEBI" id="CHEBI:30616"/>
    </ligand>
</feature>
<reference key="1">
    <citation type="journal article" date="2007" name="PLoS Genet.">
        <title>The complete genome sequence of Yersinia pseudotuberculosis IP31758, the causative agent of Far East scarlet-like fever.</title>
        <authorList>
            <person name="Eppinger M."/>
            <person name="Rosovitz M.J."/>
            <person name="Fricke W.F."/>
            <person name="Rasko D.A."/>
            <person name="Kokorina G."/>
            <person name="Fayolle C."/>
            <person name="Lindler L.E."/>
            <person name="Carniel E."/>
            <person name="Ravel J."/>
        </authorList>
    </citation>
    <scope>NUCLEOTIDE SEQUENCE [LARGE SCALE GENOMIC DNA]</scope>
    <source>
        <strain>IP 31758</strain>
    </source>
</reference>
<name>GLK_YERP3</name>
<accession>A7FGD3</accession>